<name>TRPA_METB6</name>
<protein>
    <recommendedName>
        <fullName evidence="1">Tryptophan synthase alpha chain</fullName>
        <ecNumber evidence="1">4.2.1.20</ecNumber>
    </recommendedName>
</protein>
<gene>
    <name evidence="1" type="primary">trpA</name>
    <name type="ordered locus">Mboo_0222</name>
</gene>
<reference key="1">
    <citation type="journal article" date="2015" name="Microbiology">
        <title>Genome of Methanoregula boonei 6A8 reveals adaptations to oligotrophic peatland environments.</title>
        <authorList>
            <person name="Braeuer S."/>
            <person name="Cadillo-Quiroz H."/>
            <person name="Kyrpides N."/>
            <person name="Woyke T."/>
            <person name="Goodwin L."/>
            <person name="Detter C."/>
            <person name="Podell S."/>
            <person name="Yavitt J.B."/>
            <person name="Zinder S.H."/>
        </authorList>
    </citation>
    <scope>NUCLEOTIDE SEQUENCE [LARGE SCALE GENOMIC DNA]</scope>
    <source>
        <strain>DSM 21154 / JCM 14090 / 6A8</strain>
    </source>
</reference>
<sequence>MMGRIESVFAKKGKSAFIGFTVAGDPDKETSIRIAKALIDGGTDILEFGVPFSDPVADGPTIQRADDRALASCTTPDTIFAIVREVRAYSEVPIVFLTYYNTIYRRGIDRFYLEAHEAGVDGILVADMPVEESDEVAATAEKYGIDPIFLVTQTTSNERMDTIVRHARGYLYLVSVLGVTGARKTVAPEALALLNRVRSHTDLPLAIGFGISTPEHVTTCNLAGADGVIVGSAIVDIVEKNLGNPDAMEQDLRRYVSVMKKAAEQ</sequence>
<evidence type="ECO:0000255" key="1">
    <source>
        <dbReference type="HAMAP-Rule" id="MF_00131"/>
    </source>
</evidence>
<keyword id="KW-0028">Amino-acid biosynthesis</keyword>
<keyword id="KW-0057">Aromatic amino acid biosynthesis</keyword>
<keyword id="KW-0456">Lyase</keyword>
<keyword id="KW-1185">Reference proteome</keyword>
<keyword id="KW-0822">Tryptophan biosynthesis</keyword>
<proteinExistence type="inferred from homology"/>
<comment type="function">
    <text>The alpha subunit is responsible for the aldol cleavage of indoleglycerol phosphate to indole and glyceraldehyde 3-phosphate.</text>
</comment>
<comment type="catalytic activity">
    <reaction evidence="1">
        <text>(1S,2R)-1-C-(indol-3-yl)glycerol 3-phosphate + L-serine = D-glyceraldehyde 3-phosphate + L-tryptophan + H2O</text>
        <dbReference type="Rhea" id="RHEA:10532"/>
        <dbReference type="ChEBI" id="CHEBI:15377"/>
        <dbReference type="ChEBI" id="CHEBI:33384"/>
        <dbReference type="ChEBI" id="CHEBI:57912"/>
        <dbReference type="ChEBI" id="CHEBI:58866"/>
        <dbReference type="ChEBI" id="CHEBI:59776"/>
        <dbReference type="EC" id="4.2.1.20"/>
    </reaction>
</comment>
<comment type="pathway">
    <text evidence="1">Amino-acid biosynthesis; L-tryptophan biosynthesis; L-tryptophan from chorismate: step 5/5.</text>
</comment>
<comment type="subunit">
    <text evidence="1">Tetramer of two alpha and two beta chains.</text>
</comment>
<comment type="similarity">
    <text evidence="1">Belongs to the TrpA family.</text>
</comment>
<feature type="chain" id="PRO_1000057854" description="Tryptophan synthase alpha chain">
    <location>
        <begin position="1"/>
        <end position="265"/>
    </location>
</feature>
<feature type="active site" description="Proton acceptor" evidence="1">
    <location>
        <position position="47"/>
    </location>
</feature>
<feature type="active site" description="Proton acceptor" evidence="1">
    <location>
        <position position="58"/>
    </location>
</feature>
<accession>A7I4T3</accession>
<organism>
    <name type="scientific">Methanoregula boonei (strain DSM 21154 / JCM 14090 / 6A8)</name>
    <dbReference type="NCBI Taxonomy" id="456442"/>
    <lineage>
        <taxon>Archaea</taxon>
        <taxon>Methanobacteriati</taxon>
        <taxon>Methanobacteriota</taxon>
        <taxon>Stenosarchaea group</taxon>
        <taxon>Methanomicrobia</taxon>
        <taxon>Methanomicrobiales</taxon>
        <taxon>Methanoregulaceae</taxon>
        <taxon>Methanoregula</taxon>
    </lineage>
</organism>
<dbReference type="EC" id="4.2.1.20" evidence="1"/>
<dbReference type="EMBL" id="CP000780">
    <property type="protein sequence ID" value="ABS54744.1"/>
    <property type="molecule type" value="Genomic_DNA"/>
</dbReference>
<dbReference type="RefSeq" id="WP_011991232.1">
    <property type="nucleotide sequence ID" value="NC_009712.1"/>
</dbReference>
<dbReference type="SMR" id="A7I4T3"/>
<dbReference type="STRING" id="456442.Mboo_0222"/>
<dbReference type="GeneID" id="5411822"/>
<dbReference type="KEGG" id="mbn:Mboo_0222"/>
<dbReference type="eggNOG" id="arCOG01086">
    <property type="taxonomic scope" value="Archaea"/>
</dbReference>
<dbReference type="HOGENOM" id="CLU_016734_0_4_2"/>
<dbReference type="OrthoDB" id="25658at2157"/>
<dbReference type="UniPathway" id="UPA00035">
    <property type="reaction ID" value="UER00044"/>
</dbReference>
<dbReference type="Proteomes" id="UP000002408">
    <property type="component" value="Chromosome"/>
</dbReference>
<dbReference type="GO" id="GO:0005829">
    <property type="term" value="C:cytosol"/>
    <property type="evidence" value="ECO:0007669"/>
    <property type="project" value="TreeGrafter"/>
</dbReference>
<dbReference type="GO" id="GO:0004834">
    <property type="term" value="F:tryptophan synthase activity"/>
    <property type="evidence" value="ECO:0007669"/>
    <property type="project" value="UniProtKB-UniRule"/>
</dbReference>
<dbReference type="CDD" id="cd04724">
    <property type="entry name" value="Tryptophan_synthase_alpha"/>
    <property type="match status" value="1"/>
</dbReference>
<dbReference type="FunFam" id="3.20.20.70:FF:000037">
    <property type="entry name" value="Tryptophan synthase alpha chain"/>
    <property type="match status" value="1"/>
</dbReference>
<dbReference type="Gene3D" id="3.20.20.70">
    <property type="entry name" value="Aldolase class I"/>
    <property type="match status" value="1"/>
</dbReference>
<dbReference type="HAMAP" id="MF_00131">
    <property type="entry name" value="Trp_synth_alpha"/>
    <property type="match status" value="1"/>
</dbReference>
<dbReference type="InterPro" id="IPR013785">
    <property type="entry name" value="Aldolase_TIM"/>
</dbReference>
<dbReference type="InterPro" id="IPR011060">
    <property type="entry name" value="RibuloseP-bd_barrel"/>
</dbReference>
<dbReference type="InterPro" id="IPR002028">
    <property type="entry name" value="Trp_synthase_suA"/>
</dbReference>
<dbReference type="NCBIfam" id="TIGR00262">
    <property type="entry name" value="trpA"/>
    <property type="match status" value="1"/>
</dbReference>
<dbReference type="PANTHER" id="PTHR43406:SF1">
    <property type="entry name" value="TRYPTOPHAN SYNTHASE ALPHA CHAIN, CHLOROPLASTIC"/>
    <property type="match status" value="1"/>
</dbReference>
<dbReference type="PANTHER" id="PTHR43406">
    <property type="entry name" value="TRYPTOPHAN SYNTHASE, ALPHA CHAIN"/>
    <property type="match status" value="1"/>
</dbReference>
<dbReference type="Pfam" id="PF00290">
    <property type="entry name" value="Trp_syntA"/>
    <property type="match status" value="1"/>
</dbReference>
<dbReference type="SUPFAM" id="SSF51366">
    <property type="entry name" value="Ribulose-phoshate binding barrel"/>
    <property type="match status" value="1"/>
</dbReference>